<accession>P0CN67</accession>
<accession>Q55ZJ2</accession>
<accession>Q5KNV7</accession>
<sequence length="516" mass="56881">MLRQATSRFLSSTHRSIRPLSTTAPSFIRIRSQASEPSPAERPPPVPENVNPSQPFEPEVSKSEGTAKAAETQQAEEPASAGTPLTPPQPEVVFGNTHSAASTTPETEPNVENPDYSKLPSLDIDQEAAAISEPATGKDQEVEGGERKKTGAGKKEYVSSQEKSRRMWIRAGYGALAVGAVGAVLAMGNDETTGKKQGGFVETFQNNMLELFDFFNKPAFQTLLPDPLPPPHQRPYTLCIDLEGLLVHSSWDRTHGWRTAKRPGVDYFLGYLSQFYEIVLFSSQPLYTAAPIAEKIDPYQAFMPYRLFRESTRSVKGKVVKDISFLNRDPSKVIVLDVNPEHVALQPENGIVLQPWNGSPGDKGLVDMIPFLESIGIFNPADVRPILQAYAGKDIPIEYAKKEAEAKAKAIEEWERAHPTAITGAGSGFLSSIFGSVAAPGSSRPNQPMTYLEQKRAQAQRIYQEEQKYWAEHADEFKKLIEEDKQRQLAEMKGSILGYLGAPKMQDGPKEEVLKA</sequence>
<protein>
    <recommendedName>
        <fullName>Mitochondrial import inner membrane translocase subunit TIM50</fullName>
    </recommendedName>
</protein>
<dbReference type="EMBL" id="AAEY01000003">
    <property type="protein sequence ID" value="EAL23153.1"/>
    <property type="molecule type" value="Genomic_DNA"/>
</dbReference>
<dbReference type="RefSeq" id="XP_777800.1">
    <property type="nucleotide sequence ID" value="XM_772707.1"/>
</dbReference>
<dbReference type="SMR" id="P0CN67"/>
<dbReference type="EnsemblFungi" id="AAW40998">
    <property type="protein sequence ID" value="AAW40998"/>
    <property type="gene ID" value="CNA05150"/>
</dbReference>
<dbReference type="GeneID" id="4933760"/>
<dbReference type="KEGG" id="cnb:CNBA4980"/>
<dbReference type="VEuPathDB" id="FungiDB:CNBA4980"/>
<dbReference type="HOGENOM" id="CLU_023309_1_1_1"/>
<dbReference type="OrthoDB" id="7687at5206"/>
<dbReference type="GO" id="GO:0005743">
    <property type="term" value="C:mitochondrial inner membrane"/>
    <property type="evidence" value="ECO:0007669"/>
    <property type="project" value="UniProtKB-SubCell"/>
</dbReference>
<dbReference type="GO" id="GO:0015031">
    <property type="term" value="P:protein transport"/>
    <property type="evidence" value="ECO:0007669"/>
    <property type="project" value="UniProtKB-KW"/>
</dbReference>
<dbReference type="CDD" id="cd07521">
    <property type="entry name" value="HAD_FCP1-like"/>
    <property type="match status" value="1"/>
</dbReference>
<dbReference type="FunFam" id="3.40.50.1000:FF:000019">
    <property type="entry name" value="Mitochondrial import inner membrane translocase subunit TIM50"/>
    <property type="match status" value="1"/>
</dbReference>
<dbReference type="Gene3D" id="3.40.50.1000">
    <property type="entry name" value="HAD superfamily/HAD-like"/>
    <property type="match status" value="1"/>
</dbReference>
<dbReference type="InterPro" id="IPR004274">
    <property type="entry name" value="FCP1_dom"/>
</dbReference>
<dbReference type="InterPro" id="IPR036412">
    <property type="entry name" value="HAD-like_sf"/>
</dbReference>
<dbReference type="InterPro" id="IPR023214">
    <property type="entry name" value="HAD_sf"/>
</dbReference>
<dbReference type="InterPro" id="IPR050365">
    <property type="entry name" value="TIM50"/>
</dbReference>
<dbReference type="PANTHER" id="PTHR12210">
    <property type="entry name" value="DULLARD PROTEIN PHOSPHATASE"/>
    <property type="match status" value="1"/>
</dbReference>
<dbReference type="Pfam" id="PF03031">
    <property type="entry name" value="NIF"/>
    <property type="match status" value="1"/>
</dbReference>
<dbReference type="SMART" id="SM00577">
    <property type="entry name" value="CPDc"/>
    <property type="match status" value="1"/>
</dbReference>
<dbReference type="SUPFAM" id="SSF56784">
    <property type="entry name" value="HAD-like"/>
    <property type="match status" value="1"/>
</dbReference>
<dbReference type="PROSITE" id="PS50969">
    <property type="entry name" value="FCP1"/>
    <property type="match status" value="1"/>
</dbReference>
<comment type="function">
    <text evidence="1">Essential component of the TIM23 complex, a complex that mediates the translocation of transit peptide-containing proteins across the mitochondrial inner membrane. Required to direct preproteins in transit and direct them to the channel protein TIM23, and possibly facilitates transfer of the translocating proteins from the TOM complex to the TIM23 complex (By similarity).</text>
</comment>
<comment type="subunit">
    <text evidence="1">Component of the TIM23 complex, at least composed of TIM23, TIM17 and TIM50. Interacts with preproteins in transit (By similarity).</text>
</comment>
<comment type="subcellular location">
    <subcellularLocation>
        <location evidence="1">Mitochondrion inner membrane</location>
        <topology evidence="1">Single-pass membrane protein</topology>
    </subcellularLocation>
</comment>
<comment type="similarity">
    <text evidence="5">Belongs to the TIM50 family.</text>
</comment>
<gene>
    <name type="primary">TIM50</name>
    <name type="ordered locus">CNBA4980</name>
</gene>
<evidence type="ECO:0000250" key="1"/>
<evidence type="ECO:0000255" key="2"/>
<evidence type="ECO:0000255" key="3">
    <source>
        <dbReference type="PROSITE-ProRule" id="PRU00336"/>
    </source>
</evidence>
<evidence type="ECO:0000256" key="4">
    <source>
        <dbReference type="SAM" id="MobiDB-lite"/>
    </source>
</evidence>
<evidence type="ECO:0000305" key="5"/>
<name>TIM50_CRYNB</name>
<keyword id="KW-0472">Membrane</keyword>
<keyword id="KW-0496">Mitochondrion</keyword>
<keyword id="KW-0999">Mitochondrion inner membrane</keyword>
<keyword id="KW-0653">Protein transport</keyword>
<keyword id="KW-0809">Transit peptide</keyword>
<keyword id="KW-0811">Translocation</keyword>
<keyword id="KW-0812">Transmembrane</keyword>
<keyword id="KW-1133">Transmembrane helix</keyword>
<keyword id="KW-0813">Transport</keyword>
<reference key="1">
    <citation type="journal article" date="2005" name="Science">
        <title>The genome of the basidiomycetous yeast and human pathogen Cryptococcus neoformans.</title>
        <authorList>
            <person name="Loftus B.J."/>
            <person name="Fung E."/>
            <person name="Roncaglia P."/>
            <person name="Rowley D."/>
            <person name="Amedeo P."/>
            <person name="Bruno D."/>
            <person name="Vamathevan J."/>
            <person name="Miranda M."/>
            <person name="Anderson I.J."/>
            <person name="Fraser J.A."/>
            <person name="Allen J.E."/>
            <person name="Bosdet I.E."/>
            <person name="Brent M.R."/>
            <person name="Chiu R."/>
            <person name="Doering T.L."/>
            <person name="Donlin M.J."/>
            <person name="D'Souza C.A."/>
            <person name="Fox D.S."/>
            <person name="Grinberg V."/>
            <person name="Fu J."/>
            <person name="Fukushima M."/>
            <person name="Haas B.J."/>
            <person name="Huang J.C."/>
            <person name="Janbon G."/>
            <person name="Jones S.J.M."/>
            <person name="Koo H.L."/>
            <person name="Krzywinski M.I."/>
            <person name="Kwon-Chung K.J."/>
            <person name="Lengeler K.B."/>
            <person name="Maiti R."/>
            <person name="Marra M.A."/>
            <person name="Marra R.E."/>
            <person name="Mathewson C.A."/>
            <person name="Mitchell T.G."/>
            <person name="Pertea M."/>
            <person name="Riggs F.R."/>
            <person name="Salzberg S.L."/>
            <person name="Schein J.E."/>
            <person name="Shvartsbeyn A."/>
            <person name="Shin H."/>
            <person name="Shumway M."/>
            <person name="Specht C.A."/>
            <person name="Suh B.B."/>
            <person name="Tenney A."/>
            <person name="Utterback T.R."/>
            <person name="Wickes B.L."/>
            <person name="Wortman J.R."/>
            <person name="Wye N.H."/>
            <person name="Kronstad J.W."/>
            <person name="Lodge J.K."/>
            <person name="Heitman J."/>
            <person name="Davis R.W."/>
            <person name="Fraser C.M."/>
            <person name="Hyman R.W."/>
        </authorList>
    </citation>
    <scope>NUCLEOTIDE SEQUENCE [LARGE SCALE GENOMIC DNA]</scope>
    <source>
        <strain>B-3501A</strain>
    </source>
</reference>
<organism>
    <name type="scientific">Cryptococcus neoformans var. neoformans serotype D (strain B-3501A)</name>
    <name type="common">Filobasidiella neoformans</name>
    <dbReference type="NCBI Taxonomy" id="283643"/>
    <lineage>
        <taxon>Eukaryota</taxon>
        <taxon>Fungi</taxon>
        <taxon>Dikarya</taxon>
        <taxon>Basidiomycota</taxon>
        <taxon>Agaricomycotina</taxon>
        <taxon>Tremellomycetes</taxon>
        <taxon>Tremellales</taxon>
        <taxon>Cryptococcaceae</taxon>
        <taxon>Cryptococcus</taxon>
        <taxon>Cryptococcus neoformans species complex</taxon>
    </lineage>
</organism>
<feature type="transit peptide" description="Mitochondrion" evidence="2">
    <location>
        <begin position="1"/>
        <end position="17"/>
    </location>
</feature>
<feature type="chain" id="PRO_0000410088" description="Mitochondrial import inner membrane translocase subunit TIM50">
    <location>
        <begin position="18"/>
        <end position="516"/>
    </location>
</feature>
<feature type="topological domain" description="Mitochondrial matrix" evidence="2">
    <location>
        <begin position="18"/>
        <end position="166"/>
    </location>
</feature>
<feature type="transmembrane region" description="Helical" evidence="2">
    <location>
        <begin position="167"/>
        <end position="187"/>
    </location>
</feature>
<feature type="topological domain" description="Mitochondrial intermembrane" evidence="2">
    <location>
        <begin position="188"/>
        <end position="516"/>
    </location>
</feature>
<feature type="domain" description="FCP1 homology" evidence="3">
    <location>
        <begin position="231"/>
        <end position="375"/>
    </location>
</feature>
<feature type="region of interest" description="Disordered" evidence="4">
    <location>
        <begin position="1"/>
        <end position="119"/>
    </location>
</feature>
<feature type="region of interest" description="Disordered" evidence="4">
    <location>
        <begin position="131"/>
        <end position="161"/>
    </location>
</feature>
<feature type="compositionally biased region" description="Polar residues" evidence="4">
    <location>
        <begin position="1"/>
        <end position="25"/>
    </location>
</feature>
<feature type="compositionally biased region" description="Low complexity" evidence="4">
    <location>
        <begin position="64"/>
        <end position="81"/>
    </location>
</feature>
<feature type="compositionally biased region" description="Polar residues" evidence="4">
    <location>
        <begin position="96"/>
        <end position="107"/>
    </location>
</feature>
<feature type="compositionally biased region" description="Basic and acidic residues" evidence="4">
    <location>
        <begin position="136"/>
        <end position="161"/>
    </location>
</feature>
<proteinExistence type="inferred from homology"/>